<comment type="function">
    <text evidence="2">One of the essential components for the initiation of protein synthesis. Protects formylmethionyl-tRNA from spontaneous hydrolysis and promotes its binding to the 30S ribosomal subunits. Also involved in the hydrolysis of GTP during the formation of the 70S ribosomal complex.</text>
</comment>
<comment type="subcellular location">
    <subcellularLocation>
        <location evidence="2">Cytoplasm</location>
    </subcellularLocation>
</comment>
<comment type="similarity">
    <text evidence="2">Belongs to the TRAFAC class translation factor GTPase superfamily. Classic translation factor GTPase family. IF-2 subfamily.</text>
</comment>
<name>IF2_TERTT</name>
<accession>C5BPV9</accession>
<dbReference type="EMBL" id="CP001614">
    <property type="protein sequence ID" value="ACR14658.1"/>
    <property type="molecule type" value="Genomic_DNA"/>
</dbReference>
<dbReference type="RefSeq" id="WP_015820772.1">
    <property type="nucleotide sequence ID" value="NC_012997.1"/>
</dbReference>
<dbReference type="SMR" id="C5BPV9"/>
<dbReference type="STRING" id="377629.TERTU_3217"/>
<dbReference type="KEGG" id="ttu:TERTU_3217"/>
<dbReference type="eggNOG" id="COG0532">
    <property type="taxonomic scope" value="Bacteria"/>
</dbReference>
<dbReference type="HOGENOM" id="CLU_006301_6_3_6"/>
<dbReference type="OrthoDB" id="9811804at2"/>
<dbReference type="Proteomes" id="UP000009080">
    <property type="component" value="Chromosome"/>
</dbReference>
<dbReference type="GO" id="GO:0005829">
    <property type="term" value="C:cytosol"/>
    <property type="evidence" value="ECO:0007669"/>
    <property type="project" value="TreeGrafter"/>
</dbReference>
<dbReference type="GO" id="GO:0005525">
    <property type="term" value="F:GTP binding"/>
    <property type="evidence" value="ECO:0007669"/>
    <property type="project" value="UniProtKB-KW"/>
</dbReference>
<dbReference type="GO" id="GO:0003924">
    <property type="term" value="F:GTPase activity"/>
    <property type="evidence" value="ECO:0007669"/>
    <property type="project" value="UniProtKB-UniRule"/>
</dbReference>
<dbReference type="GO" id="GO:0003743">
    <property type="term" value="F:translation initiation factor activity"/>
    <property type="evidence" value="ECO:0007669"/>
    <property type="project" value="UniProtKB-UniRule"/>
</dbReference>
<dbReference type="CDD" id="cd01887">
    <property type="entry name" value="IF2_eIF5B"/>
    <property type="match status" value="1"/>
</dbReference>
<dbReference type="CDD" id="cd03702">
    <property type="entry name" value="IF2_mtIF2_II"/>
    <property type="match status" value="1"/>
</dbReference>
<dbReference type="CDD" id="cd03692">
    <property type="entry name" value="mtIF2_IVc"/>
    <property type="match status" value="1"/>
</dbReference>
<dbReference type="FunFam" id="2.40.30.10:FF:000007">
    <property type="entry name" value="Translation initiation factor IF-2"/>
    <property type="match status" value="1"/>
</dbReference>
<dbReference type="FunFam" id="2.40.30.10:FF:000008">
    <property type="entry name" value="Translation initiation factor IF-2"/>
    <property type="match status" value="1"/>
</dbReference>
<dbReference type="FunFam" id="3.40.50.10050:FF:000001">
    <property type="entry name" value="Translation initiation factor IF-2"/>
    <property type="match status" value="1"/>
</dbReference>
<dbReference type="FunFam" id="3.40.50.300:FF:000019">
    <property type="entry name" value="Translation initiation factor IF-2"/>
    <property type="match status" value="1"/>
</dbReference>
<dbReference type="Gene3D" id="3.40.50.300">
    <property type="entry name" value="P-loop containing nucleotide triphosphate hydrolases"/>
    <property type="match status" value="1"/>
</dbReference>
<dbReference type="Gene3D" id="3.30.56.50">
    <property type="entry name" value="Putative DNA-binding domain, N-terminal subdomain of bacterial translation initiation factor IF2"/>
    <property type="match status" value="1"/>
</dbReference>
<dbReference type="Gene3D" id="2.40.30.10">
    <property type="entry name" value="Translation factors"/>
    <property type="match status" value="2"/>
</dbReference>
<dbReference type="Gene3D" id="3.40.50.10050">
    <property type="entry name" value="Translation initiation factor IF- 2, domain 3"/>
    <property type="match status" value="1"/>
</dbReference>
<dbReference type="HAMAP" id="MF_00100_B">
    <property type="entry name" value="IF_2_B"/>
    <property type="match status" value="1"/>
</dbReference>
<dbReference type="InterPro" id="IPR009061">
    <property type="entry name" value="DNA-bd_dom_put_sf"/>
</dbReference>
<dbReference type="InterPro" id="IPR053905">
    <property type="entry name" value="EF-G-like_DII"/>
</dbReference>
<dbReference type="InterPro" id="IPR013575">
    <property type="entry name" value="IF2_assoc_dom_bac"/>
</dbReference>
<dbReference type="InterPro" id="IPR044145">
    <property type="entry name" value="IF2_II"/>
</dbReference>
<dbReference type="InterPro" id="IPR006847">
    <property type="entry name" value="IF2_N"/>
</dbReference>
<dbReference type="InterPro" id="IPR027417">
    <property type="entry name" value="P-loop_NTPase"/>
</dbReference>
<dbReference type="InterPro" id="IPR005225">
    <property type="entry name" value="Small_GTP-bd"/>
</dbReference>
<dbReference type="InterPro" id="IPR000795">
    <property type="entry name" value="T_Tr_GTP-bd_dom"/>
</dbReference>
<dbReference type="InterPro" id="IPR000178">
    <property type="entry name" value="TF_IF2_bacterial-like"/>
</dbReference>
<dbReference type="InterPro" id="IPR015760">
    <property type="entry name" value="TIF_IF2"/>
</dbReference>
<dbReference type="InterPro" id="IPR023115">
    <property type="entry name" value="TIF_IF2_dom3"/>
</dbReference>
<dbReference type="InterPro" id="IPR036925">
    <property type="entry name" value="TIF_IF2_dom3_sf"/>
</dbReference>
<dbReference type="InterPro" id="IPR009000">
    <property type="entry name" value="Transl_B-barrel_sf"/>
</dbReference>
<dbReference type="NCBIfam" id="TIGR00487">
    <property type="entry name" value="IF-2"/>
    <property type="match status" value="1"/>
</dbReference>
<dbReference type="NCBIfam" id="TIGR00231">
    <property type="entry name" value="small_GTP"/>
    <property type="match status" value="1"/>
</dbReference>
<dbReference type="PANTHER" id="PTHR43381:SF5">
    <property type="entry name" value="TR-TYPE G DOMAIN-CONTAINING PROTEIN"/>
    <property type="match status" value="1"/>
</dbReference>
<dbReference type="PANTHER" id="PTHR43381">
    <property type="entry name" value="TRANSLATION INITIATION FACTOR IF-2-RELATED"/>
    <property type="match status" value="1"/>
</dbReference>
<dbReference type="Pfam" id="PF22042">
    <property type="entry name" value="EF-G_D2"/>
    <property type="match status" value="1"/>
</dbReference>
<dbReference type="Pfam" id="PF00009">
    <property type="entry name" value="GTP_EFTU"/>
    <property type="match status" value="1"/>
</dbReference>
<dbReference type="Pfam" id="PF11987">
    <property type="entry name" value="IF-2"/>
    <property type="match status" value="1"/>
</dbReference>
<dbReference type="Pfam" id="PF08364">
    <property type="entry name" value="IF2_assoc"/>
    <property type="match status" value="1"/>
</dbReference>
<dbReference type="Pfam" id="PF04760">
    <property type="entry name" value="IF2_N"/>
    <property type="match status" value="2"/>
</dbReference>
<dbReference type="SUPFAM" id="SSF52156">
    <property type="entry name" value="Initiation factor IF2/eIF5b, domain 3"/>
    <property type="match status" value="1"/>
</dbReference>
<dbReference type="SUPFAM" id="SSF52540">
    <property type="entry name" value="P-loop containing nucleoside triphosphate hydrolases"/>
    <property type="match status" value="1"/>
</dbReference>
<dbReference type="SUPFAM" id="SSF46955">
    <property type="entry name" value="Putative DNA-binding domain"/>
    <property type="match status" value="1"/>
</dbReference>
<dbReference type="SUPFAM" id="SSF50447">
    <property type="entry name" value="Translation proteins"/>
    <property type="match status" value="2"/>
</dbReference>
<dbReference type="PROSITE" id="PS51722">
    <property type="entry name" value="G_TR_2"/>
    <property type="match status" value="1"/>
</dbReference>
<dbReference type="PROSITE" id="PS01176">
    <property type="entry name" value="IF2"/>
    <property type="match status" value="1"/>
</dbReference>
<gene>
    <name evidence="2" type="primary">infB</name>
    <name type="ordered locus">TERTU_3217</name>
</gene>
<proteinExistence type="inferred from homology"/>
<sequence length="940" mass="101496">MAEVTVSELAKSVGASVDRILAQMKQAGLSHQTPDDTVSDEEKQTLLSFLKSSHGESAAAPKKITLKRKTTTTLKTGSGSGRKTVNVEVRKKRTYVKRELTAEDATETAADEVLIPEQEQLESTSVAEIPESVSSDTAVEEIVADTVVEAEVEAASPEPEPEVEATPEPEVEDVVAEEAEPAAAEPAPAPVVEQRSSFVDDAEILRQRAAVRKKAEEEAEVARRKADAEKAEAAAKQKAEQAAVQKGSVEKPAAGDKDESKHHKKPKPKSETEEFDEEAKAKHNKKAGKAVKKVAGPKKVASALDYVEDKEEIDEVIHSAPKSKKGGQNNNSSNSGSRPLIKVANRHGFKKPTGKITYKVEIPEEIVVSELAQRMNVKAGEVVKHLFKLGTMVTINQAIDQETAQLVVEEMGHEAVLVSGDAVEQKLREQVVEVDDAELVARAPVVTVMGHVDHGKTSLLDYIRKTRVASGEAGGITQHIGAYRVNTSHGELAFLDTPGHAAFTAMRARGAQCTDVVILVVAADDGVMPQTEEAVQHARAAGVPLVVAVNKIDKEAADPDRVKNELSAKDVIPEDWGGDTQFINVSAQTGEGIEELLEAVALQAELLELSAPVNVPARGVVIESRMDKGRGVVATVLVQGGELKRGDIMLAGQSFGRVRAMVNEYGDNIDSAPPSTPVEILGLDTPPEAGDEFLVVPDERKAREVSEFRAEKERTERMQRQQAAKLENMFAGMGSDEKKILPIVLKTDVRGSLEAIQAALLDVGNDEVQVNFVGGGVGGITENDVNLALTSGAVIVGFNVRADNSARKLAESESAEIRYYSIIYQLIDEVKSALAGMLDPERVEEIVGIAEVRDVFRSPKFGQVAGCMVVEGNVYRNKPIRVLRDNVVIFEGELESLRRFKDDVNEVRNGMECGIGVKNYDVKVGDQIEVFDVKEVAREL</sequence>
<organism>
    <name type="scientific">Teredinibacter turnerae (strain ATCC 39867 / T7901)</name>
    <dbReference type="NCBI Taxonomy" id="377629"/>
    <lineage>
        <taxon>Bacteria</taxon>
        <taxon>Pseudomonadati</taxon>
        <taxon>Pseudomonadota</taxon>
        <taxon>Gammaproteobacteria</taxon>
        <taxon>Cellvibrionales</taxon>
        <taxon>Cellvibrionaceae</taxon>
        <taxon>Teredinibacter</taxon>
    </lineage>
</organism>
<protein>
    <recommendedName>
        <fullName evidence="2">Translation initiation factor IF-2</fullName>
    </recommendedName>
</protein>
<keyword id="KW-0963">Cytoplasm</keyword>
<keyword id="KW-0342">GTP-binding</keyword>
<keyword id="KW-0396">Initiation factor</keyword>
<keyword id="KW-0547">Nucleotide-binding</keyword>
<keyword id="KW-0648">Protein biosynthesis</keyword>
<keyword id="KW-1185">Reference proteome</keyword>
<reference key="1">
    <citation type="journal article" date="2009" name="PLoS ONE">
        <title>The complete genome of Teredinibacter turnerae T7901: an intracellular endosymbiont of marine wood-boring bivalves (shipworms).</title>
        <authorList>
            <person name="Yang J.C."/>
            <person name="Madupu R."/>
            <person name="Durkin A.S."/>
            <person name="Ekborg N.A."/>
            <person name="Pedamallu C.S."/>
            <person name="Hostetler J.B."/>
            <person name="Radune D."/>
            <person name="Toms B.S."/>
            <person name="Henrissat B."/>
            <person name="Coutinho P.M."/>
            <person name="Schwarz S."/>
            <person name="Field L."/>
            <person name="Trindade-Silva A.E."/>
            <person name="Soares C.A.G."/>
            <person name="Elshahawi S."/>
            <person name="Hanora A."/>
            <person name="Schmidt E.W."/>
            <person name="Haygood M.G."/>
            <person name="Posfai J."/>
            <person name="Benner J."/>
            <person name="Madinger C."/>
            <person name="Nove J."/>
            <person name="Anton B."/>
            <person name="Chaudhary K."/>
            <person name="Foster J."/>
            <person name="Holman A."/>
            <person name="Kumar S."/>
            <person name="Lessard P.A."/>
            <person name="Luyten Y.A."/>
            <person name="Slatko B."/>
            <person name="Wood N."/>
            <person name="Wu B."/>
            <person name="Teplitski M."/>
            <person name="Mougous J.D."/>
            <person name="Ward N."/>
            <person name="Eisen J.A."/>
            <person name="Badger J.H."/>
            <person name="Distel D.L."/>
        </authorList>
    </citation>
    <scope>NUCLEOTIDE SEQUENCE [LARGE SCALE GENOMIC DNA]</scope>
    <source>
        <strain>ATCC 39867 / T7901</strain>
    </source>
</reference>
<evidence type="ECO:0000250" key="1"/>
<evidence type="ECO:0000255" key="2">
    <source>
        <dbReference type="HAMAP-Rule" id="MF_00100"/>
    </source>
</evidence>
<evidence type="ECO:0000256" key="3">
    <source>
        <dbReference type="SAM" id="MobiDB-lite"/>
    </source>
</evidence>
<feature type="chain" id="PRO_1000202785" description="Translation initiation factor IF-2">
    <location>
        <begin position="1"/>
        <end position="940"/>
    </location>
</feature>
<feature type="domain" description="tr-type G">
    <location>
        <begin position="441"/>
        <end position="610"/>
    </location>
</feature>
<feature type="region of interest" description="Disordered" evidence="3">
    <location>
        <begin position="116"/>
        <end position="137"/>
    </location>
</feature>
<feature type="region of interest" description="Disordered" evidence="3">
    <location>
        <begin position="151"/>
        <end position="196"/>
    </location>
</feature>
<feature type="region of interest" description="Disordered" evidence="3">
    <location>
        <begin position="210"/>
        <end position="294"/>
    </location>
</feature>
<feature type="region of interest" description="Disordered" evidence="3">
    <location>
        <begin position="318"/>
        <end position="346"/>
    </location>
</feature>
<feature type="region of interest" description="G1" evidence="1">
    <location>
        <begin position="450"/>
        <end position="457"/>
    </location>
</feature>
<feature type="region of interest" description="G2" evidence="1">
    <location>
        <begin position="475"/>
        <end position="479"/>
    </location>
</feature>
<feature type="region of interest" description="G3" evidence="1">
    <location>
        <begin position="496"/>
        <end position="499"/>
    </location>
</feature>
<feature type="region of interest" description="G4" evidence="1">
    <location>
        <begin position="550"/>
        <end position="553"/>
    </location>
</feature>
<feature type="region of interest" description="G5" evidence="1">
    <location>
        <begin position="586"/>
        <end position="588"/>
    </location>
</feature>
<feature type="compositionally biased region" description="Polar residues" evidence="3">
    <location>
        <begin position="121"/>
        <end position="137"/>
    </location>
</feature>
<feature type="compositionally biased region" description="Acidic residues" evidence="3">
    <location>
        <begin position="159"/>
        <end position="180"/>
    </location>
</feature>
<feature type="compositionally biased region" description="Low complexity" evidence="3">
    <location>
        <begin position="181"/>
        <end position="193"/>
    </location>
</feature>
<feature type="compositionally biased region" description="Basic and acidic residues" evidence="3">
    <location>
        <begin position="213"/>
        <end position="239"/>
    </location>
</feature>
<feature type="compositionally biased region" description="Basic residues" evidence="3">
    <location>
        <begin position="282"/>
        <end position="294"/>
    </location>
</feature>
<feature type="compositionally biased region" description="Low complexity" evidence="3">
    <location>
        <begin position="326"/>
        <end position="337"/>
    </location>
</feature>
<feature type="binding site" evidence="2">
    <location>
        <begin position="450"/>
        <end position="457"/>
    </location>
    <ligand>
        <name>GTP</name>
        <dbReference type="ChEBI" id="CHEBI:37565"/>
    </ligand>
</feature>
<feature type="binding site" evidence="2">
    <location>
        <begin position="496"/>
        <end position="500"/>
    </location>
    <ligand>
        <name>GTP</name>
        <dbReference type="ChEBI" id="CHEBI:37565"/>
    </ligand>
</feature>
<feature type="binding site" evidence="2">
    <location>
        <begin position="550"/>
        <end position="553"/>
    </location>
    <ligand>
        <name>GTP</name>
        <dbReference type="ChEBI" id="CHEBI:37565"/>
    </ligand>
</feature>